<dbReference type="EMBL" id="AE013599">
    <property type="protein sequence ID" value="ACL83061.1"/>
    <property type="molecule type" value="Genomic_DNA"/>
</dbReference>
<dbReference type="EMBL" id="AE013599">
    <property type="protein sequence ID" value="ACL83062.1"/>
    <property type="molecule type" value="Genomic_DNA"/>
</dbReference>
<dbReference type="EMBL" id="AE013599">
    <property type="protein sequence ID" value="ACL83063.1"/>
    <property type="molecule type" value="Genomic_DNA"/>
</dbReference>
<dbReference type="EMBL" id="AE013599">
    <property type="protein sequence ID" value="AAM68367.1"/>
    <property type="molecule type" value="Genomic_DNA"/>
</dbReference>
<dbReference type="EMBL" id="AE013599">
    <property type="protein sequence ID" value="AAM68368.2"/>
    <property type="molecule type" value="Genomic_DNA"/>
</dbReference>
<dbReference type="EMBL" id="AE013599">
    <property type="protein sequence ID" value="AHN55938.1"/>
    <property type="molecule type" value="Genomic_DNA"/>
</dbReference>
<dbReference type="EMBL" id="AY071264">
    <property type="protein sequence ID" value="AAL48886.1"/>
    <property type="molecule type" value="mRNA"/>
</dbReference>
<dbReference type="EMBL" id="KX531422">
    <property type="protein sequence ID" value="ANY27232.1"/>
    <property type="molecule type" value="mRNA"/>
</dbReference>
<dbReference type="RefSeq" id="NP_001137607.1">
    <molecule id="B7YZT2-1"/>
    <property type="nucleotide sequence ID" value="NM_001144135.2"/>
</dbReference>
<dbReference type="RefSeq" id="NP_001137608.1">
    <molecule id="B7YZT2-2"/>
    <property type="nucleotide sequence ID" value="NM_001144136.3"/>
</dbReference>
<dbReference type="RefSeq" id="NP_001137609.1">
    <molecule id="B7YZT2-3"/>
    <property type="nucleotide sequence ID" value="NM_001144137.3"/>
</dbReference>
<dbReference type="RefSeq" id="NP_001286140.1">
    <molecule id="B7YZT2-4"/>
    <property type="nucleotide sequence ID" value="NM_001299211.1"/>
</dbReference>
<dbReference type="RefSeq" id="NP_652100.1">
    <molecule id="B7YZT2-4"/>
    <property type="nucleotide sequence ID" value="NM_143843.4"/>
</dbReference>
<dbReference type="RefSeq" id="NP_724420.1">
    <molecule id="B7YZT2-3"/>
    <property type="nucleotide sequence ID" value="NM_165439.4"/>
</dbReference>
<dbReference type="SMR" id="B7YZT2"/>
<dbReference type="FunCoup" id="B7YZT2">
    <property type="interactions" value="1182"/>
</dbReference>
<dbReference type="IntAct" id="B7YZT2">
    <property type="interactions" value="3"/>
</dbReference>
<dbReference type="STRING" id="7227.FBpp0271716"/>
<dbReference type="PaxDb" id="7227-FBpp0271716"/>
<dbReference type="DNASU" id="49892"/>
<dbReference type="EnsemblMetazoa" id="FBtr0086073">
    <molecule id="B7YZT2-4"/>
    <property type="protein sequence ID" value="FBpp0085409"/>
    <property type="gene ID" value="FBgn0039969"/>
</dbReference>
<dbReference type="EnsemblMetazoa" id="FBtr0273208">
    <molecule id="B7YZT2-1"/>
    <property type="protein sequence ID" value="FBpp0271716"/>
    <property type="gene ID" value="FBgn0039969"/>
</dbReference>
<dbReference type="EnsemblMetazoa" id="FBtr0273209">
    <molecule id="B7YZT2-3"/>
    <property type="protein sequence ID" value="FBpp0271717"/>
    <property type="gene ID" value="FBgn0039969"/>
</dbReference>
<dbReference type="EnsemblMetazoa" id="FBtr0273210">
    <molecule id="B7YZT2-2"/>
    <property type="protein sequence ID" value="FBpp0271718"/>
    <property type="gene ID" value="FBgn0039969"/>
</dbReference>
<dbReference type="EnsemblMetazoa" id="FBtr0273211">
    <molecule id="B7YZT2-3"/>
    <property type="protein sequence ID" value="FBpp0271719"/>
    <property type="gene ID" value="FBgn0039969"/>
</dbReference>
<dbReference type="EnsemblMetazoa" id="FBtr0345012">
    <molecule id="B7YZT2-4"/>
    <property type="protein sequence ID" value="FBpp0311263"/>
    <property type="gene ID" value="FBgn0039969"/>
</dbReference>
<dbReference type="GeneID" id="49892"/>
<dbReference type="KEGG" id="dme:Dmel_CG17510"/>
<dbReference type="UCSC" id="CG17510-RA">
    <property type="organism name" value="d. melanogaster"/>
</dbReference>
<dbReference type="UCSC" id="CG17510-RC">
    <property type="organism name" value="d. melanogaster"/>
</dbReference>
<dbReference type="AGR" id="FB:FBgn0039969"/>
<dbReference type="CTD" id="51024"/>
<dbReference type="FlyBase" id="FBgn0039969">
    <property type="gene designation" value="Fis1"/>
</dbReference>
<dbReference type="VEuPathDB" id="VectorBase:FBgn0039969"/>
<dbReference type="eggNOG" id="KOG3364">
    <property type="taxonomic scope" value="Eukaryota"/>
</dbReference>
<dbReference type="GeneTree" id="ENSGT00390000000592"/>
<dbReference type="InParanoid" id="B7YZT2"/>
<dbReference type="OMA" id="LQIAPDW"/>
<dbReference type="OrthoDB" id="421154at2759"/>
<dbReference type="PhylomeDB" id="B7YZT2"/>
<dbReference type="Reactome" id="R-DME-9603798">
    <property type="pathway name" value="Class I peroxisomal membrane protein import"/>
</dbReference>
<dbReference type="BioGRID-ORCS" id="49892">
    <property type="hits" value="1 hit in 3 CRISPR screens"/>
</dbReference>
<dbReference type="GenomeRNAi" id="49892"/>
<dbReference type="PRO" id="PR:B7YZT2"/>
<dbReference type="Proteomes" id="UP000000803">
    <property type="component" value="Chromosome 2R"/>
</dbReference>
<dbReference type="Bgee" id="FBgn0039969">
    <property type="expression patterns" value="Expressed in proximal medullary amacrine neuron Pm4 in brain and 277 other cell types or tissues"/>
</dbReference>
<dbReference type="ExpressionAtlas" id="B7YZT2">
    <property type="expression patterns" value="baseline and differential"/>
</dbReference>
<dbReference type="GO" id="GO:0005741">
    <property type="term" value="C:mitochondrial outer membrane"/>
    <property type="evidence" value="ECO:0000318"/>
    <property type="project" value="GO_Central"/>
</dbReference>
<dbReference type="GO" id="GO:0005778">
    <property type="term" value="C:peroxisomal membrane"/>
    <property type="evidence" value="ECO:0000250"/>
    <property type="project" value="FlyBase"/>
</dbReference>
<dbReference type="GO" id="GO:0008289">
    <property type="term" value="F:lipid binding"/>
    <property type="evidence" value="ECO:0000318"/>
    <property type="project" value="GO_Central"/>
</dbReference>
<dbReference type="GO" id="GO:0060090">
    <property type="term" value="F:molecular adaptor activity"/>
    <property type="evidence" value="ECO:0000318"/>
    <property type="project" value="GO_Central"/>
</dbReference>
<dbReference type="GO" id="GO:0000266">
    <property type="term" value="P:mitochondrial fission"/>
    <property type="evidence" value="ECO:0000318"/>
    <property type="project" value="GO_Central"/>
</dbReference>
<dbReference type="GO" id="GO:0007005">
    <property type="term" value="P:mitochondrion organization"/>
    <property type="evidence" value="ECO:0000316"/>
    <property type="project" value="FlyBase"/>
</dbReference>
<dbReference type="GO" id="GO:0016559">
    <property type="term" value="P:peroxisome fission"/>
    <property type="evidence" value="ECO:0000318"/>
    <property type="project" value="GO_Central"/>
</dbReference>
<dbReference type="GO" id="GO:0090141">
    <property type="term" value="P:positive regulation of mitochondrial fission"/>
    <property type="evidence" value="ECO:0000315"/>
    <property type="project" value="FlyBase"/>
</dbReference>
<dbReference type="CDD" id="cd12212">
    <property type="entry name" value="Fis1"/>
    <property type="match status" value="1"/>
</dbReference>
<dbReference type="FunFam" id="1.25.40.10:FF:002212">
    <property type="entry name" value="Mitochondrial fission 1 protein"/>
    <property type="match status" value="1"/>
</dbReference>
<dbReference type="Gene3D" id="1.25.40.10">
    <property type="entry name" value="Tetratricopeptide repeat domain"/>
    <property type="match status" value="1"/>
</dbReference>
<dbReference type="InterPro" id="IPR016543">
    <property type="entry name" value="Fis1"/>
</dbReference>
<dbReference type="InterPro" id="IPR033745">
    <property type="entry name" value="Fis1_cytosol"/>
</dbReference>
<dbReference type="InterPro" id="IPR028061">
    <property type="entry name" value="Fis1_TPR_C"/>
</dbReference>
<dbReference type="InterPro" id="IPR028058">
    <property type="entry name" value="Fis1_TPR_N"/>
</dbReference>
<dbReference type="InterPro" id="IPR011990">
    <property type="entry name" value="TPR-like_helical_dom_sf"/>
</dbReference>
<dbReference type="PANTHER" id="PTHR13247:SF0">
    <property type="entry name" value="MITOCHONDRIAL FISSION 1 PROTEIN"/>
    <property type="match status" value="1"/>
</dbReference>
<dbReference type="PANTHER" id="PTHR13247">
    <property type="entry name" value="TETRATRICOPEPTIDE REPEAT PROTEIN 11 TPR REPEAT PROTEIN 11"/>
    <property type="match status" value="1"/>
</dbReference>
<dbReference type="Pfam" id="PF14853">
    <property type="entry name" value="Fis1_TPR_C"/>
    <property type="match status" value="1"/>
</dbReference>
<dbReference type="Pfam" id="PF14852">
    <property type="entry name" value="Fis1_TPR_N"/>
    <property type="match status" value="1"/>
</dbReference>
<dbReference type="PIRSF" id="PIRSF008835">
    <property type="entry name" value="TPR_repeat_11_Fis1"/>
    <property type="match status" value="1"/>
</dbReference>
<dbReference type="SUPFAM" id="SSF48452">
    <property type="entry name" value="TPR-like"/>
    <property type="match status" value="1"/>
</dbReference>
<proteinExistence type="evidence at transcript level"/>
<name>FIS1_DROME</name>
<gene>
    <name evidence="5 9" type="primary">Fis1</name>
    <name evidence="9" type="ORF">CG17510</name>
</gene>
<evidence type="ECO:0000255" key="1"/>
<evidence type="ECO:0000255" key="2">
    <source>
        <dbReference type="PIRNR" id="PIRNR008835"/>
    </source>
</evidence>
<evidence type="ECO:0000269" key="3">
    <source>
    </source>
</evidence>
<evidence type="ECO:0000269" key="4">
    <source>
    </source>
</evidence>
<evidence type="ECO:0000303" key="5">
    <source>
    </source>
</evidence>
<evidence type="ECO:0000305" key="6"/>
<evidence type="ECO:0000312" key="7">
    <source>
        <dbReference type="EMBL" id="AAL48886.1"/>
    </source>
</evidence>
<evidence type="ECO:0000312" key="8">
    <source>
        <dbReference type="EMBL" id="ANY27232.1"/>
    </source>
</evidence>
<evidence type="ECO:0000312" key="9">
    <source>
        <dbReference type="FlyBase" id="FBgn0039969"/>
    </source>
</evidence>
<evidence type="ECO:0000312" key="10">
    <source>
        <dbReference type="Proteomes" id="UP000000803"/>
    </source>
</evidence>
<accession>B7YZT2</accession>
<accession>A1Z6G3</accession>
<accession>B7YZT3</accession>
<accession>Q8SYX2</accession>
<keyword id="KW-0025">Alternative splicing</keyword>
<keyword id="KW-0472">Membrane</keyword>
<keyword id="KW-0496">Mitochondrion</keyword>
<keyword id="KW-1000">Mitochondrion outer membrane</keyword>
<keyword id="KW-1185">Reference proteome</keyword>
<keyword id="KW-0812">Transmembrane</keyword>
<keyword id="KW-1133">Transmembrane helix</keyword>
<organism evidence="10">
    <name type="scientific">Drosophila melanogaster</name>
    <name type="common">Fruit fly</name>
    <dbReference type="NCBI Taxonomy" id="7227"/>
    <lineage>
        <taxon>Eukaryota</taxon>
        <taxon>Metazoa</taxon>
        <taxon>Ecdysozoa</taxon>
        <taxon>Arthropoda</taxon>
        <taxon>Hexapoda</taxon>
        <taxon>Insecta</taxon>
        <taxon>Pterygota</taxon>
        <taxon>Neoptera</taxon>
        <taxon>Endopterygota</taxon>
        <taxon>Diptera</taxon>
        <taxon>Brachycera</taxon>
        <taxon>Muscomorpha</taxon>
        <taxon>Ephydroidea</taxon>
        <taxon>Drosophilidae</taxon>
        <taxon>Drosophila</taxon>
        <taxon>Sophophora</taxon>
    </lineage>
</organism>
<protein>
    <recommendedName>
        <fullName evidence="2">Mitochondrial fission 1 protein</fullName>
    </recommendedName>
</protein>
<reference evidence="10" key="1">
    <citation type="journal article" date="2000" name="Science">
        <title>The genome sequence of Drosophila melanogaster.</title>
        <authorList>
            <person name="Adams M.D."/>
            <person name="Celniker S.E."/>
            <person name="Holt R.A."/>
            <person name="Evans C.A."/>
            <person name="Gocayne J.D."/>
            <person name="Amanatides P.G."/>
            <person name="Scherer S.E."/>
            <person name="Li P.W."/>
            <person name="Hoskins R.A."/>
            <person name="Galle R.F."/>
            <person name="George R.A."/>
            <person name="Lewis S.E."/>
            <person name="Richards S."/>
            <person name="Ashburner M."/>
            <person name="Henderson S.N."/>
            <person name="Sutton G.G."/>
            <person name="Wortman J.R."/>
            <person name="Yandell M.D."/>
            <person name="Zhang Q."/>
            <person name="Chen L.X."/>
            <person name="Brandon R.C."/>
            <person name="Rogers Y.-H.C."/>
            <person name="Blazej R.G."/>
            <person name="Champe M."/>
            <person name="Pfeiffer B.D."/>
            <person name="Wan K.H."/>
            <person name="Doyle C."/>
            <person name="Baxter E.G."/>
            <person name="Helt G."/>
            <person name="Nelson C.R."/>
            <person name="Miklos G.L.G."/>
            <person name="Abril J.F."/>
            <person name="Agbayani A."/>
            <person name="An H.-J."/>
            <person name="Andrews-Pfannkoch C."/>
            <person name="Baldwin D."/>
            <person name="Ballew R.M."/>
            <person name="Basu A."/>
            <person name="Baxendale J."/>
            <person name="Bayraktaroglu L."/>
            <person name="Beasley E.M."/>
            <person name="Beeson K.Y."/>
            <person name="Benos P.V."/>
            <person name="Berman B.P."/>
            <person name="Bhandari D."/>
            <person name="Bolshakov S."/>
            <person name="Borkova D."/>
            <person name="Botchan M.R."/>
            <person name="Bouck J."/>
            <person name="Brokstein P."/>
            <person name="Brottier P."/>
            <person name="Burtis K.C."/>
            <person name="Busam D.A."/>
            <person name="Butler H."/>
            <person name="Cadieu E."/>
            <person name="Center A."/>
            <person name="Chandra I."/>
            <person name="Cherry J.M."/>
            <person name="Cawley S."/>
            <person name="Dahlke C."/>
            <person name="Davenport L.B."/>
            <person name="Davies P."/>
            <person name="de Pablos B."/>
            <person name="Delcher A."/>
            <person name="Deng Z."/>
            <person name="Mays A.D."/>
            <person name="Dew I."/>
            <person name="Dietz S.M."/>
            <person name="Dodson K."/>
            <person name="Doup L.E."/>
            <person name="Downes M."/>
            <person name="Dugan-Rocha S."/>
            <person name="Dunkov B.C."/>
            <person name="Dunn P."/>
            <person name="Durbin K.J."/>
            <person name="Evangelista C.C."/>
            <person name="Ferraz C."/>
            <person name="Ferriera S."/>
            <person name="Fleischmann W."/>
            <person name="Fosler C."/>
            <person name="Gabrielian A.E."/>
            <person name="Garg N.S."/>
            <person name="Gelbart W.M."/>
            <person name="Glasser K."/>
            <person name="Glodek A."/>
            <person name="Gong F."/>
            <person name="Gorrell J.H."/>
            <person name="Gu Z."/>
            <person name="Guan P."/>
            <person name="Harris M."/>
            <person name="Harris N.L."/>
            <person name="Harvey D.A."/>
            <person name="Heiman T.J."/>
            <person name="Hernandez J.R."/>
            <person name="Houck J."/>
            <person name="Hostin D."/>
            <person name="Houston K.A."/>
            <person name="Howland T.J."/>
            <person name="Wei M.-H."/>
            <person name="Ibegwam C."/>
            <person name="Jalali M."/>
            <person name="Kalush F."/>
            <person name="Karpen G.H."/>
            <person name="Ke Z."/>
            <person name="Kennison J.A."/>
            <person name="Ketchum K.A."/>
            <person name="Kimmel B.E."/>
            <person name="Kodira C.D."/>
            <person name="Kraft C.L."/>
            <person name="Kravitz S."/>
            <person name="Kulp D."/>
            <person name="Lai Z."/>
            <person name="Lasko P."/>
            <person name="Lei Y."/>
            <person name="Levitsky A.A."/>
            <person name="Li J.H."/>
            <person name="Li Z."/>
            <person name="Liang Y."/>
            <person name="Lin X."/>
            <person name="Liu X."/>
            <person name="Mattei B."/>
            <person name="McIntosh T.C."/>
            <person name="McLeod M.P."/>
            <person name="McPherson D."/>
            <person name="Merkulov G."/>
            <person name="Milshina N.V."/>
            <person name="Mobarry C."/>
            <person name="Morris J."/>
            <person name="Moshrefi A."/>
            <person name="Mount S.M."/>
            <person name="Moy M."/>
            <person name="Murphy B."/>
            <person name="Murphy L."/>
            <person name="Muzny D.M."/>
            <person name="Nelson D.L."/>
            <person name="Nelson D.R."/>
            <person name="Nelson K.A."/>
            <person name="Nixon K."/>
            <person name="Nusskern D.R."/>
            <person name="Pacleb J.M."/>
            <person name="Palazzolo M."/>
            <person name="Pittman G.S."/>
            <person name="Pan S."/>
            <person name="Pollard J."/>
            <person name="Puri V."/>
            <person name="Reese M.G."/>
            <person name="Reinert K."/>
            <person name="Remington K."/>
            <person name="Saunders R.D.C."/>
            <person name="Scheeler F."/>
            <person name="Shen H."/>
            <person name="Shue B.C."/>
            <person name="Siden-Kiamos I."/>
            <person name="Simpson M."/>
            <person name="Skupski M.P."/>
            <person name="Smith T.J."/>
            <person name="Spier E."/>
            <person name="Spradling A.C."/>
            <person name="Stapleton M."/>
            <person name="Strong R."/>
            <person name="Sun E."/>
            <person name="Svirskas R."/>
            <person name="Tector C."/>
            <person name="Turner R."/>
            <person name="Venter E."/>
            <person name="Wang A.H."/>
            <person name="Wang X."/>
            <person name="Wang Z.-Y."/>
            <person name="Wassarman D.A."/>
            <person name="Weinstock G.M."/>
            <person name="Weissenbach J."/>
            <person name="Williams S.M."/>
            <person name="Woodage T."/>
            <person name="Worley K.C."/>
            <person name="Wu D."/>
            <person name="Yang S."/>
            <person name="Yao Q.A."/>
            <person name="Ye J."/>
            <person name="Yeh R.-F."/>
            <person name="Zaveri J.S."/>
            <person name="Zhan M."/>
            <person name="Zhang G."/>
            <person name="Zhao Q."/>
            <person name="Zheng L."/>
            <person name="Zheng X.H."/>
            <person name="Zhong F.N."/>
            <person name="Zhong W."/>
            <person name="Zhou X."/>
            <person name="Zhu S.C."/>
            <person name="Zhu X."/>
            <person name="Smith H.O."/>
            <person name="Gibbs R.A."/>
            <person name="Myers E.W."/>
            <person name="Rubin G.M."/>
            <person name="Venter J.C."/>
        </authorList>
    </citation>
    <scope>NUCLEOTIDE SEQUENCE [LARGE SCALE GENOMIC DNA]</scope>
    <source>
        <strain>Berkeley</strain>
    </source>
</reference>
<reference evidence="10" key="2">
    <citation type="journal article" date="2002" name="Genome Biol.">
        <title>Annotation of the Drosophila melanogaster euchromatic genome: a systematic review.</title>
        <authorList>
            <person name="Misra S."/>
            <person name="Crosby M.A."/>
            <person name="Mungall C.J."/>
            <person name="Matthews B.B."/>
            <person name="Campbell K.S."/>
            <person name="Hradecky P."/>
            <person name="Huang Y."/>
            <person name="Kaminker J.S."/>
            <person name="Millburn G.H."/>
            <person name="Prochnik S.E."/>
            <person name="Smith C.D."/>
            <person name="Tupy J.L."/>
            <person name="Whitfield E.J."/>
            <person name="Bayraktaroglu L."/>
            <person name="Berman B.P."/>
            <person name="Bettencourt B.R."/>
            <person name="Celniker S.E."/>
            <person name="de Grey A.D.N.J."/>
            <person name="Drysdale R.A."/>
            <person name="Harris N.L."/>
            <person name="Richter J."/>
            <person name="Russo S."/>
            <person name="Schroeder A.J."/>
            <person name="Shu S.Q."/>
            <person name="Stapleton M."/>
            <person name="Yamada C."/>
            <person name="Ashburner M."/>
            <person name="Gelbart W.M."/>
            <person name="Rubin G.M."/>
            <person name="Lewis S.E."/>
        </authorList>
    </citation>
    <scope>GENOME REANNOTATION</scope>
    <source>
        <strain>Berkeley</strain>
    </source>
</reference>
<reference evidence="7" key="3">
    <citation type="journal article" date="2002" name="Genome Biol.">
        <title>A Drosophila full-length cDNA resource.</title>
        <authorList>
            <person name="Stapleton M."/>
            <person name="Carlson J.W."/>
            <person name="Brokstein P."/>
            <person name="Yu C."/>
            <person name="Champe M."/>
            <person name="George R.A."/>
            <person name="Guarin H."/>
            <person name="Kronmiller B."/>
            <person name="Pacleb J.M."/>
            <person name="Park S."/>
            <person name="Wan K.H."/>
            <person name="Rubin G.M."/>
            <person name="Celniker S.E."/>
        </authorList>
    </citation>
    <scope>NUCLEOTIDE SEQUENCE [LARGE SCALE MRNA] (ISOFORM A)</scope>
    <source>
        <strain>Berkeley</strain>
        <tissue>Embryo</tissue>
    </source>
</reference>
<reference evidence="8" key="4">
    <citation type="submission" date="2016-07" db="EMBL/GenBank/DDBJ databases">
        <authorList>
            <person name="Florea S."/>
            <person name="Webb J.S."/>
            <person name="Jaromczyk J."/>
            <person name="Schardl C.L."/>
        </authorList>
    </citation>
    <scope>NUCLEOTIDE SEQUENCE [LARGE SCALE MRNA] (ISOFORM A)</scope>
</reference>
<reference evidence="6" key="5">
    <citation type="journal article" date="2008" name="Proc. Natl. Acad. Sci. U.S.A.">
        <title>Pink1 regulates mitochondrial dynamics through interaction with the fission/fusion machinery.</title>
        <authorList>
            <person name="Yang Y."/>
            <person name="Ouyang Y."/>
            <person name="Yang L."/>
            <person name="Beal M.F."/>
            <person name="McQuibban A."/>
            <person name="Vogel H."/>
            <person name="Lu B."/>
        </authorList>
    </citation>
    <scope>FUNCTION</scope>
</reference>
<reference key="6">
    <citation type="journal article" date="2008" name="Proc. Natl. Acad. Sci. U.S.A.">
        <authorList>
            <person name="Yang Y."/>
            <person name="Ouyang Y."/>
            <person name="Yang L."/>
            <person name="Beal M.F."/>
            <person name="McQuibban A."/>
            <person name="Vogel H."/>
            <person name="Lu B."/>
        </authorList>
    </citation>
    <scope>ERRATUM OF PUBMED:18443288</scope>
</reference>
<reference evidence="6" key="7">
    <citation type="journal article" date="2010" name="Proc. Natl. Acad. Sci. U.S.A.">
        <title>Drosophila parkin requires PINK1 for mitochondrial translocation and ubiquitinates mitofusin.</title>
        <authorList>
            <person name="Ziviani E."/>
            <person name="Tao R.N."/>
            <person name="Whitworth A.J."/>
        </authorList>
    </citation>
    <scope>FUNCTION</scope>
    <scope>DISRUPTION PHENOTYPE</scope>
</reference>
<sequence>MEDLLNEVVPQEDLERFEKKYHHELELDGEVTTDTKFEYAFCLVRSRYTNDVRKGIMILEELARTHPDGRRDYIYYLAFGNARIKEYTSGLKYCRAFLDIESNDQVRSLEEYIKKEIDKEVAKGMVVAGGAALVLGGILGLGIAMARNKQKREK</sequence>
<comment type="function">
    <text evidence="3 4">Involved in the fragmentation of the mitochondrial network and its perinuclear clustering (PubMed:18443288, PubMed:20194754). Functions downstream of Pink1 and upstream of Drp1 to regulate mitochondrial fission (PubMed:18443288).</text>
</comment>
<comment type="subcellular location">
    <subcellularLocation>
        <location evidence="2">Mitochondrion outer membrane</location>
        <topology evidence="1">Single-pass membrane protein</topology>
    </subcellularLocation>
</comment>
<comment type="alternative products">
    <event type="alternative splicing"/>
    <isoform>
        <id>B7YZT2-1</id>
        <name evidence="9">C</name>
        <sequence type="displayed"/>
    </isoform>
    <isoform>
        <id>B7YZT2-2</id>
        <name evidence="9">E</name>
        <sequence type="described" ref="VSP_059257"/>
    </isoform>
    <isoform>
        <id>B7YZT2-3</id>
        <name evidence="9">D</name>
        <name evidence="9">F</name>
        <sequence type="described" ref="VSP_059256 VSP_059257"/>
    </isoform>
    <isoform>
        <id>B7YZT2-4</id>
        <name evidence="9">A</name>
        <name evidence="9">G</name>
        <sequence type="described" ref="VSP_059256"/>
    </isoform>
</comment>
<comment type="domain">
    <text evidence="2">The C-terminus is required for mitochondrial localization, while the N-terminus is necessary for mitochondrial fission.</text>
</comment>
<comment type="disruption phenotype">
    <text evidence="4">RNAi-mediated knockdown results in elongated mitochondria.</text>
</comment>
<comment type="similarity">
    <text evidence="6">Belongs to the FIS1 family.</text>
</comment>
<feature type="chain" id="PRO_0000442534" description="Mitochondrial fission 1 protein">
    <location>
        <begin position="1"/>
        <end position="154"/>
    </location>
</feature>
<feature type="topological domain" description="Cytoplasmic" evidence="6">
    <location>
        <begin position="1"/>
        <end position="124"/>
    </location>
</feature>
<feature type="transmembrane region" description="Helical" evidence="1">
    <location>
        <begin position="125"/>
        <end position="145"/>
    </location>
</feature>
<feature type="topological domain" description="Mitochondrial intermembrane" evidence="6">
    <location>
        <begin position="146"/>
        <end position="154"/>
    </location>
</feature>
<feature type="splice variant" id="VSP_059256" description="In isoform D and isoform A." evidence="6">
    <location>
        <begin position="1"/>
        <end position="56"/>
    </location>
</feature>
<feature type="splice variant" id="VSP_059257" description="In isoform E and isoform D." evidence="6">
    <original>NKQKREK</original>
    <variation>K</variation>
    <location>
        <begin position="148"/>
        <end position="154"/>
    </location>
</feature>